<keyword id="KW-0349">Heme</keyword>
<keyword id="KW-0408">Iron</keyword>
<keyword id="KW-0472">Membrane</keyword>
<keyword id="KW-0479">Metal-binding</keyword>
<keyword id="KW-0503">Monooxygenase</keyword>
<keyword id="KW-0560">Oxidoreductase</keyword>
<keyword id="KW-1185">Reference proteome</keyword>
<keyword id="KW-0812">Transmembrane</keyword>
<keyword id="KW-1133">Transmembrane helix</keyword>
<proteinExistence type="evidence at transcript level"/>
<sequence length="502" mass="56724">MEETNIRVVLYSIFSLIFLIISFKFLKPKKQNLPPSPPGWLPIIGHLRLLKPPIHRTLRSFSETLDHNDGGGVMSLRLGSRLVYVVSSHKVAAEECFGKNDVVLANRPQVIIGKHVGYNNTNMIAAPYGDHWRNLRRLCTIEIFSTHRLNCFLYVRTDEVRRLISRLSRLAGTKKTVVELKPMLMDLTFNNIMRMMTGKRYYGEETTDEEEAKRVRKLVADVGANTSSGNAVDYVPILRLFSSYENRVKKLGEETDKFLQGLIDDKRGQQETGTTMIDHLLVLQKSDIEYYTDQIIKGIILIMVIAGTNTSAVTLEWALSNLLNHPDVISKARDEIDNRVGLDRLIEEADLSELPYLKNIVLETLRLHPATPLLVPHMASEDCKIGSYDMPRGTTLLVNAWAIHRDPNTWDDPDSFKPERFEKEEEAQKLLAFGLGRRACPGSGLAQRIVGLALGSLIQCFEWERVGNVEVDMKEGVGNTVPKAIPLKAICKARPFLHKIIS</sequence>
<evidence type="ECO:0000250" key="1"/>
<evidence type="ECO:0000255" key="2"/>
<evidence type="ECO:0000305" key="3"/>
<protein>
    <recommendedName>
        <fullName>Cytochrome P450 81D1</fullName>
        <ecNumber>1.14.-.-</ecNumber>
    </recommendedName>
</protein>
<dbReference type="EC" id="1.14.-.-"/>
<dbReference type="EMBL" id="AB026661">
    <property type="protein sequence ID" value="BAB09361.1"/>
    <property type="molecule type" value="Genomic_DNA"/>
</dbReference>
<dbReference type="EMBL" id="CP002688">
    <property type="protein sequence ID" value="AED94058.1"/>
    <property type="molecule type" value="Genomic_DNA"/>
</dbReference>
<dbReference type="EMBL" id="AY093766">
    <property type="protein sequence ID" value="AAM10388.1"/>
    <property type="molecule type" value="mRNA"/>
</dbReference>
<dbReference type="EMBL" id="BT001045">
    <property type="protein sequence ID" value="AAN46799.1"/>
    <property type="molecule type" value="mRNA"/>
</dbReference>
<dbReference type="EMBL" id="D78606">
    <property type="protein sequence ID" value="BAA28538.1"/>
    <property type="molecule type" value="mRNA"/>
</dbReference>
<dbReference type="PIR" id="T52174">
    <property type="entry name" value="T52174"/>
</dbReference>
<dbReference type="RefSeq" id="NP_568533.2">
    <property type="nucleotide sequence ID" value="NM_123013.4"/>
</dbReference>
<dbReference type="SMR" id="Q9FG65"/>
<dbReference type="FunCoup" id="Q9FG65">
    <property type="interactions" value="291"/>
</dbReference>
<dbReference type="IntAct" id="Q9FG65">
    <property type="interactions" value="1"/>
</dbReference>
<dbReference type="STRING" id="3702.Q9FG65"/>
<dbReference type="PaxDb" id="3702-AT5G36220.1"/>
<dbReference type="ProteomicsDB" id="239117"/>
<dbReference type="EnsemblPlants" id="AT5G36220.1">
    <property type="protein sequence ID" value="AT5G36220.1"/>
    <property type="gene ID" value="AT5G36220"/>
</dbReference>
<dbReference type="GeneID" id="833619"/>
<dbReference type="Gramene" id="AT5G36220.1">
    <property type="protein sequence ID" value="AT5G36220.1"/>
    <property type="gene ID" value="AT5G36220"/>
</dbReference>
<dbReference type="KEGG" id="ath:AT5G36220"/>
<dbReference type="Araport" id="AT5G36220"/>
<dbReference type="TAIR" id="AT5G36220">
    <property type="gene designation" value="CYP81D1"/>
</dbReference>
<dbReference type="eggNOG" id="KOG0156">
    <property type="taxonomic scope" value="Eukaryota"/>
</dbReference>
<dbReference type="HOGENOM" id="CLU_001570_4_0_1"/>
<dbReference type="InParanoid" id="Q9FG65"/>
<dbReference type="OMA" id="HRGHNKD"/>
<dbReference type="PhylomeDB" id="Q9FG65"/>
<dbReference type="BioCyc" id="ARA:AT5G36220-MONOMER"/>
<dbReference type="PRO" id="PR:Q9FG65"/>
<dbReference type="Proteomes" id="UP000006548">
    <property type="component" value="Chromosome 5"/>
</dbReference>
<dbReference type="ExpressionAtlas" id="Q9FG65">
    <property type="expression patterns" value="baseline and differential"/>
</dbReference>
<dbReference type="GO" id="GO:0016020">
    <property type="term" value="C:membrane"/>
    <property type="evidence" value="ECO:0007669"/>
    <property type="project" value="UniProtKB-SubCell"/>
</dbReference>
<dbReference type="GO" id="GO:0020037">
    <property type="term" value="F:heme binding"/>
    <property type="evidence" value="ECO:0007669"/>
    <property type="project" value="InterPro"/>
</dbReference>
<dbReference type="GO" id="GO:0005506">
    <property type="term" value="F:iron ion binding"/>
    <property type="evidence" value="ECO:0007669"/>
    <property type="project" value="InterPro"/>
</dbReference>
<dbReference type="GO" id="GO:0004497">
    <property type="term" value="F:monooxygenase activity"/>
    <property type="evidence" value="ECO:0007669"/>
    <property type="project" value="UniProtKB-KW"/>
</dbReference>
<dbReference type="GO" id="GO:0016705">
    <property type="term" value="F:oxidoreductase activity, acting on paired donors, with incorporation or reduction of molecular oxygen"/>
    <property type="evidence" value="ECO:0007669"/>
    <property type="project" value="InterPro"/>
</dbReference>
<dbReference type="CDD" id="cd20653">
    <property type="entry name" value="CYP81"/>
    <property type="match status" value="1"/>
</dbReference>
<dbReference type="FunFam" id="1.10.630.10:FF:000023">
    <property type="entry name" value="Cytochrome P450 family protein"/>
    <property type="match status" value="1"/>
</dbReference>
<dbReference type="Gene3D" id="1.10.630.10">
    <property type="entry name" value="Cytochrome P450"/>
    <property type="match status" value="1"/>
</dbReference>
<dbReference type="InterPro" id="IPR001128">
    <property type="entry name" value="Cyt_P450"/>
</dbReference>
<dbReference type="InterPro" id="IPR017972">
    <property type="entry name" value="Cyt_P450_CS"/>
</dbReference>
<dbReference type="InterPro" id="IPR002401">
    <property type="entry name" value="Cyt_P450_E_grp-I"/>
</dbReference>
<dbReference type="InterPro" id="IPR036396">
    <property type="entry name" value="Cyt_P450_sf"/>
</dbReference>
<dbReference type="InterPro" id="IPR050651">
    <property type="entry name" value="Plant_Cytochrome_P450_Monoox"/>
</dbReference>
<dbReference type="PANTHER" id="PTHR47947">
    <property type="entry name" value="CYTOCHROME P450 82C3-RELATED"/>
    <property type="match status" value="1"/>
</dbReference>
<dbReference type="PANTHER" id="PTHR47947:SF62">
    <property type="entry name" value="CYTOCHROME P450, FAMILY 81, SUBFAMILY D, POLYPEPTIDE 5"/>
    <property type="match status" value="1"/>
</dbReference>
<dbReference type="Pfam" id="PF00067">
    <property type="entry name" value="p450"/>
    <property type="match status" value="1"/>
</dbReference>
<dbReference type="PRINTS" id="PR00463">
    <property type="entry name" value="EP450I"/>
</dbReference>
<dbReference type="PRINTS" id="PR00385">
    <property type="entry name" value="P450"/>
</dbReference>
<dbReference type="SUPFAM" id="SSF48264">
    <property type="entry name" value="Cytochrome P450"/>
    <property type="match status" value="1"/>
</dbReference>
<dbReference type="PROSITE" id="PS00086">
    <property type="entry name" value="CYTOCHROME_P450"/>
    <property type="match status" value="1"/>
</dbReference>
<name>C81D1_ARATH</name>
<reference key="1">
    <citation type="submission" date="1999-04" db="EMBL/GenBank/DDBJ databases">
        <title>Structural analysis of Arabidopsis thaliana chromosome 5. XI.</title>
        <authorList>
            <person name="Kaneko T."/>
            <person name="Katoh T."/>
            <person name="Asamizu E."/>
            <person name="Sato S."/>
            <person name="Nakamura Y."/>
            <person name="Kotani H."/>
            <person name="Tabata S."/>
        </authorList>
    </citation>
    <scope>NUCLEOTIDE SEQUENCE [LARGE SCALE GENOMIC DNA]</scope>
    <source>
        <strain>cv. Columbia</strain>
    </source>
</reference>
<reference key="2">
    <citation type="journal article" date="2017" name="Plant J.">
        <title>Araport11: a complete reannotation of the Arabidopsis thaliana reference genome.</title>
        <authorList>
            <person name="Cheng C.Y."/>
            <person name="Krishnakumar V."/>
            <person name="Chan A.P."/>
            <person name="Thibaud-Nissen F."/>
            <person name="Schobel S."/>
            <person name="Town C.D."/>
        </authorList>
    </citation>
    <scope>GENOME REANNOTATION</scope>
    <source>
        <strain>cv. Columbia</strain>
    </source>
</reference>
<reference key="3">
    <citation type="journal article" date="2003" name="Science">
        <title>Empirical analysis of transcriptional activity in the Arabidopsis genome.</title>
        <authorList>
            <person name="Yamada K."/>
            <person name="Lim J."/>
            <person name="Dale J.M."/>
            <person name="Chen H."/>
            <person name="Shinn P."/>
            <person name="Palm C.J."/>
            <person name="Southwick A.M."/>
            <person name="Wu H.C."/>
            <person name="Kim C.J."/>
            <person name="Nguyen M."/>
            <person name="Pham P.K."/>
            <person name="Cheuk R.F."/>
            <person name="Karlin-Newmann G."/>
            <person name="Liu S.X."/>
            <person name="Lam B."/>
            <person name="Sakano H."/>
            <person name="Wu T."/>
            <person name="Yu G."/>
            <person name="Miranda M."/>
            <person name="Quach H.L."/>
            <person name="Tripp M."/>
            <person name="Chang C.H."/>
            <person name="Lee J.M."/>
            <person name="Toriumi M.J."/>
            <person name="Chan M.M."/>
            <person name="Tang C.C."/>
            <person name="Onodera C.S."/>
            <person name="Deng J.M."/>
            <person name="Akiyama K."/>
            <person name="Ansari Y."/>
            <person name="Arakawa T."/>
            <person name="Banh J."/>
            <person name="Banno F."/>
            <person name="Bowser L."/>
            <person name="Brooks S.Y."/>
            <person name="Carninci P."/>
            <person name="Chao Q."/>
            <person name="Choy N."/>
            <person name="Enju A."/>
            <person name="Goldsmith A.D."/>
            <person name="Gurjal M."/>
            <person name="Hansen N.F."/>
            <person name="Hayashizaki Y."/>
            <person name="Johnson-Hopson C."/>
            <person name="Hsuan V.W."/>
            <person name="Iida K."/>
            <person name="Karnes M."/>
            <person name="Khan S."/>
            <person name="Koesema E."/>
            <person name="Ishida J."/>
            <person name="Jiang P.X."/>
            <person name="Jones T."/>
            <person name="Kawai J."/>
            <person name="Kamiya A."/>
            <person name="Meyers C."/>
            <person name="Nakajima M."/>
            <person name="Narusaka M."/>
            <person name="Seki M."/>
            <person name="Sakurai T."/>
            <person name="Satou M."/>
            <person name="Tamse R."/>
            <person name="Vaysberg M."/>
            <person name="Wallender E.K."/>
            <person name="Wong C."/>
            <person name="Yamamura Y."/>
            <person name="Yuan S."/>
            <person name="Shinozaki K."/>
            <person name="Davis R.W."/>
            <person name="Theologis A."/>
            <person name="Ecker J.R."/>
        </authorList>
    </citation>
    <scope>NUCLEOTIDE SEQUENCE [LARGE SCALE MRNA]</scope>
    <source>
        <strain>cv. Columbia</strain>
    </source>
</reference>
<reference key="4">
    <citation type="journal article" date="1998" name="Plant Mol. Biol.">
        <title>Cytochrome P450 superfamily in Arabidopsis thaliana: isolation of cDNAs, differential expression, and RFLP mapping of multiple cytochromes P450.</title>
        <authorList>
            <person name="Mizutani M."/>
            <person name="Ward E."/>
            <person name="Ohta D."/>
        </authorList>
    </citation>
    <scope>NUCLEOTIDE SEQUENCE [MRNA] OF 3-502</scope>
    <source>
        <strain>cv. Columbia</strain>
    </source>
</reference>
<comment type="cofactor">
    <cofactor evidence="1">
        <name>heme</name>
        <dbReference type="ChEBI" id="CHEBI:30413"/>
    </cofactor>
</comment>
<comment type="subcellular location">
    <subcellularLocation>
        <location evidence="3">Membrane</location>
        <topology evidence="3">Single-pass membrane protein</topology>
    </subcellularLocation>
</comment>
<comment type="similarity">
    <text evidence="3">Belongs to the cytochrome P450 family.</text>
</comment>
<gene>
    <name type="primary">CYP81D1</name>
    <name type="synonym">CYP91A1</name>
    <name type="ordered locus">At5g36220</name>
    <name type="ORF">T30G6.3</name>
</gene>
<feature type="chain" id="PRO_0000052159" description="Cytochrome P450 81D1">
    <location>
        <begin position="1"/>
        <end position="502"/>
    </location>
</feature>
<feature type="transmembrane region" description="Helical" evidence="2">
    <location>
        <begin position="6"/>
        <end position="26"/>
    </location>
</feature>
<feature type="binding site" description="axial binding residue" evidence="1">
    <location>
        <position position="440"/>
    </location>
    <ligand>
        <name>heme</name>
        <dbReference type="ChEBI" id="CHEBI:30413"/>
    </ligand>
    <ligandPart>
        <name>Fe</name>
        <dbReference type="ChEBI" id="CHEBI:18248"/>
    </ligandPart>
</feature>
<feature type="sequence conflict" description="In Ref. 4; BAA28538." evidence="3" ref="4">
    <original>T</original>
    <variation>A</variation>
    <location>
        <position position="121"/>
    </location>
</feature>
<accession>Q9FG65</accession>
<accession>O65789</accession>
<organism>
    <name type="scientific">Arabidopsis thaliana</name>
    <name type="common">Mouse-ear cress</name>
    <dbReference type="NCBI Taxonomy" id="3702"/>
    <lineage>
        <taxon>Eukaryota</taxon>
        <taxon>Viridiplantae</taxon>
        <taxon>Streptophyta</taxon>
        <taxon>Embryophyta</taxon>
        <taxon>Tracheophyta</taxon>
        <taxon>Spermatophyta</taxon>
        <taxon>Magnoliopsida</taxon>
        <taxon>eudicotyledons</taxon>
        <taxon>Gunneridae</taxon>
        <taxon>Pentapetalae</taxon>
        <taxon>rosids</taxon>
        <taxon>malvids</taxon>
        <taxon>Brassicales</taxon>
        <taxon>Brassicaceae</taxon>
        <taxon>Camelineae</taxon>
        <taxon>Arabidopsis</taxon>
    </lineage>
</organism>